<proteinExistence type="inferred from homology"/>
<comment type="function">
    <text evidence="1">Catalyzes the specific phosphorylation of 1,6-anhydro-N-acetylmuramic acid (anhMurNAc) with the simultaneous cleavage of the 1,6-anhydro ring, generating MurNAc-6-P. Is required for the utilization of anhMurNAc either imported from the medium or derived from its own cell wall murein, and thus plays a role in cell wall recycling.</text>
</comment>
<comment type="catalytic activity">
    <reaction evidence="1">
        <text>1,6-anhydro-N-acetyl-beta-muramate + ATP + H2O = N-acetyl-D-muramate 6-phosphate + ADP + H(+)</text>
        <dbReference type="Rhea" id="RHEA:24952"/>
        <dbReference type="ChEBI" id="CHEBI:15377"/>
        <dbReference type="ChEBI" id="CHEBI:15378"/>
        <dbReference type="ChEBI" id="CHEBI:30616"/>
        <dbReference type="ChEBI" id="CHEBI:58690"/>
        <dbReference type="ChEBI" id="CHEBI:58722"/>
        <dbReference type="ChEBI" id="CHEBI:456216"/>
        <dbReference type="EC" id="2.7.1.170"/>
    </reaction>
</comment>
<comment type="pathway">
    <text evidence="1">Amino-sugar metabolism; 1,6-anhydro-N-acetylmuramate degradation.</text>
</comment>
<comment type="pathway">
    <text evidence="1">Cell wall biogenesis; peptidoglycan recycling.</text>
</comment>
<comment type="similarity">
    <text evidence="1">Belongs to the anhydro-N-acetylmuramic acid kinase family.</text>
</comment>
<evidence type="ECO:0000255" key="1">
    <source>
        <dbReference type="HAMAP-Rule" id="MF_01270"/>
    </source>
</evidence>
<sequence>MDSTTHGPRTHVPGRLFIGLMSGTSMDGADGVLVRLDGPRPEVLASASLPMPAALRDELFALNHAGANELERAALAANGLARLYARAVRQLLDQAGLQPGDVAAIGAHGQTVRHRPDLGYTLQLNAPALLAELAGIDVVADFRSRDVAAGGQGAPLVPPFHAALFAGGQARAVLNLGGIANVTLLEPGRPPRGFDTGPANVLLDAWCQRHTGQPYDADGRFAAQGQVLAGLLEHLIASEPWFALAPPKSTGRDLFNLDWLLARLQAFDGPAPQPQDVQATLQRLTARTVANAIDASAAAPRDVLVCGGGARNPGLMRELAYCLQRPVHPTDDAGVPAQWVEALAFAWLAQACLDRIPAGLPTVTGARAARVLGALYPA</sequence>
<protein>
    <recommendedName>
        <fullName evidence="1">Anhydro-N-acetylmuramic acid kinase</fullName>
        <ecNumber evidence="1">2.7.1.170</ecNumber>
    </recommendedName>
    <alternativeName>
        <fullName evidence="1">AnhMurNAc kinase</fullName>
    </alternativeName>
</protein>
<dbReference type="EC" id="2.7.1.170" evidence="1"/>
<dbReference type="EMBL" id="BX640450">
    <property type="protein sequence ID" value="CAE34715.1"/>
    <property type="molecule type" value="Genomic_DNA"/>
</dbReference>
<dbReference type="RefSeq" id="WP_003814881.1">
    <property type="nucleotide sequence ID" value="NC_002927.3"/>
</dbReference>
<dbReference type="SMR" id="Q7WFC8"/>
<dbReference type="KEGG" id="bbr:BB4352"/>
<dbReference type="eggNOG" id="COG2377">
    <property type="taxonomic scope" value="Bacteria"/>
</dbReference>
<dbReference type="HOGENOM" id="CLU_038782_0_0_4"/>
<dbReference type="UniPathway" id="UPA00343"/>
<dbReference type="UniPathway" id="UPA00544"/>
<dbReference type="Proteomes" id="UP000001027">
    <property type="component" value="Chromosome"/>
</dbReference>
<dbReference type="GO" id="GO:0005524">
    <property type="term" value="F:ATP binding"/>
    <property type="evidence" value="ECO:0007669"/>
    <property type="project" value="UniProtKB-UniRule"/>
</dbReference>
<dbReference type="GO" id="GO:0016301">
    <property type="term" value="F:kinase activity"/>
    <property type="evidence" value="ECO:0007669"/>
    <property type="project" value="UniProtKB-KW"/>
</dbReference>
<dbReference type="GO" id="GO:0016773">
    <property type="term" value="F:phosphotransferase activity, alcohol group as acceptor"/>
    <property type="evidence" value="ECO:0007669"/>
    <property type="project" value="UniProtKB-UniRule"/>
</dbReference>
<dbReference type="GO" id="GO:0097175">
    <property type="term" value="P:1,6-anhydro-N-acetyl-beta-muramic acid catabolic process"/>
    <property type="evidence" value="ECO:0007669"/>
    <property type="project" value="UniProtKB-UniRule"/>
</dbReference>
<dbReference type="GO" id="GO:0006040">
    <property type="term" value="P:amino sugar metabolic process"/>
    <property type="evidence" value="ECO:0007669"/>
    <property type="project" value="InterPro"/>
</dbReference>
<dbReference type="GO" id="GO:0009254">
    <property type="term" value="P:peptidoglycan turnover"/>
    <property type="evidence" value="ECO:0007669"/>
    <property type="project" value="UniProtKB-UniRule"/>
</dbReference>
<dbReference type="CDD" id="cd24050">
    <property type="entry name" value="ASKHA_NBD_ANMK"/>
    <property type="match status" value="1"/>
</dbReference>
<dbReference type="Gene3D" id="3.30.420.40">
    <property type="match status" value="2"/>
</dbReference>
<dbReference type="HAMAP" id="MF_01270">
    <property type="entry name" value="AnhMurNAc_kinase"/>
    <property type="match status" value="1"/>
</dbReference>
<dbReference type="InterPro" id="IPR005338">
    <property type="entry name" value="Anhydro_N_Ac-Mur_kinase"/>
</dbReference>
<dbReference type="InterPro" id="IPR043129">
    <property type="entry name" value="ATPase_NBD"/>
</dbReference>
<dbReference type="NCBIfam" id="NF007139">
    <property type="entry name" value="PRK09585.1-3"/>
    <property type="match status" value="1"/>
</dbReference>
<dbReference type="PANTHER" id="PTHR30605">
    <property type="entry name" value="ANHYDRO-N-ACETYLMURAMIC ACID KINASE"/>
    <property type="match status" value="1"/>
</dbReference>
<dbReference type="PANTHER" id="PTHR30605:SF0">
    <property type="entry name" value="ANHYDRO-N-ACETYLMURAMIC ACID KINASE"/>
    <property type="match status" value="1"/>
</dbReference>
<dbReference type="Pfam" id="PF03702">
    <property type="entry name" value="AnmK"/>
    <property type="match status" value="1"/>
</dbReference>
<dbReference type="SUPFAM" id="SSF53067">
    <property type="entry name" value="Actin-like ATPase domain"/>
    <property type="match status" value="1"/>
</dbReference>
<reference key="1">
    <citation type="journal article" date="2003" name="Nat. Genet.">
        <title>Comparative analysis of the genome sequences of Bordetella pertussis, Bordetella parapertussis and Bordetella bronchiseptica.</title>
        <authorList>
            <person name="Parkhill J."/>
            <person name="Sebaihia M."/>
            <person name="Preston A."/>
            <person name="Murphy L.D."/>
            <person name="Thomson N.R."/>
            <person name="Harris D.E."/>
            <person name="Holden M.T.G."/>
            <person name="Churcher C.M."/>
            <person name="Bentley S.D."/>
            <person name="Mungall K.L."/>
            <person name="Cerdeno-Tarraga A.-M."/>
            <person name="Temple L."/>
            <person name="James K.D."/>
            <person name="Harris B."/>
            <person name="Quail M.A."/>
            <person name="Achtman M."/>
            <person name="Atkin R."/>
            <person name="Baker S."/>
            <person name="Basham D."/>
            <person name="Bason N."/>
            <person name="Cherevach I."/>
            <person name="Chillingworth T."/>
            <person name="Collins M."/>
            <person name="Cronin A."/>
            <person name="Davis P."/>
            <person name="Doggett J."/>
            <person name="Feltwell T."/>
            <person name="Goble A."/>
            <person name="Hamlin N."/>
            <person name="Hauser H."/>
            <person name="Holroyd S."/>
            <person name="Jagels K."/>
            <person name="Leather S."/>
            <person name="Moule S."/>
            <person name="Norberczak H."/>
            <person name="O'Neil S."/>
            <person name="Ormond D."/>
            <person name="Price C."/>
            <person name="Rabbinowitsch E."/>
            <person name="Rutter S."/>
            <person name="Sanders M."/>
            <person name="Saunders D."/>
            <person name="Seeger K."/>
            <person name="Sharp S."/>
            <person name="Simmonds M."/>
            <person name="Skelton J."/>
            <person name="Squares R."/>
            <person name="Squares S."/>
            <person name="Stevens K."/>
            <person name="Unwin L."/>
            <person name="Whitehead S."/>
            <person name="Barrell B.G."/>
            <person name="Maskell D.J."/>
        </authorList>
    </citation>
    <scope>NUCLEOTIDE SEQUENCE [LARGE SCALE GENOMIC DNA]</scope>
    <source>
        <strain>ATCC BAA-588 / NCTC 13252 / RB50</strain>
    </source>
</reference>
<feature type="chain" id="PRO_0000249976" description="Anhydro-N-acetylmuramic acid kinase">
    <location>
        <begin position="1"/>
        <end position="378"/>
    </location>
</feature>
<feature type="binding site" evidence="1">
    <location>
        <begin position="23"/>
        <end position="30"/>
    </location>
    <ligand>
        <name>ATP</name>
        <dbReference type="ChEBI" id="CHEBI:30616"/>
    </ligand>
</feature>
<organism>
    <name type="scientific">Bordetella bronchiseptica (strain ATCC BAA-588 / NCTC 13252 / RB50)</name>
    <name type="common">Alcaligenes bronchisepticus</name>
    <dbReference type="NCBI Taxonomy" id="257310"/>
    <lineage>
        <taxon>Bacteria</taxon>
        <taxon>Pseudomonadati</taxon>
        <taxon>Pseudomonadota</taxon>
        <taxon>Betaproteobacteria</taxon>
        <taxon>Burkholderiales</taxon>
        <taxon>Alcaligenaceae</taxon>
        <taxon>Bordetella</taxon>
    </lineage>
</organism>
<gene>
    <name evidence="1" type="primary">anmK</name>
    <name type="ordered locus">BB4352</name>
</gene>
<accession>Q7WFC8</accession>
<keyword id="KW-0067">ATP-binding</keyword>
<keyword id="KW-0119">Carbohydrate metabolism</keyword>
<keyword id="KW-0418">Kinase</keyword>
<keyword id="KW-0547">Nucleotide-binding</keyword>
<keyword id="KW-0808">Transferase</keyword>
<name>ANMK_BORBR</name>